<sequence>MTESPTAGPGGVPRADDADSDVPRYRYTAELAARLERTWQENWARLGTFNVPNPVGSLAPPDGAAVPDDKLFVQDMFPYPSGEGLHVGHPLGYIATDVYARYFRMVGRNVLHALGFDAFGLPAEQYAVQTGTHPRTRTEANVVNFRRQLGRLGFGHDSRRSFSTTDVDFYRWTQWIFLQIYNAWFDTTANKARPISELVAEFESGARCLDGGRDWAKLTAGERADVIDEYRLVYRADSLVNWCPGLGTVLANEEVTADGRSDRGNFPVFRKRLRQWMMRITAYADRLLDDLDVLDWPEQVKTMQRNWIGRSTGAVALFSARAASDDGFEVDIEVFTTRPDTLFGATYLVLAPEHDLVDELVAASWPAGVNPLWTYGGGTPGEAIAAYRRAIAAKSDLERQESREKTGVFLGSYAINPANGEPVPIFIADYVLAGYGTGAIMAVPGHDQRDWDFARAFGLPIVEVIAGGNISESAYTGDGILVNSDYLNGMSVPAAKRAIVDRLESAGRGRARIEFKLRDWLFARQRYWGEPFPIVYDSDGRPHALDEAALPVELPDVPDYSPVLFDPDDADSEPSPPLAKATEWVHVDLDLGDGLKPYSRDTNVMPQWAGSSWYELRYTDPHNSERFCAKENEAYWMGPRPAEHGPDDPGGVDLYVGGAEHAVLHLLYSRFWHKVLYDLGHVSSREPYRRLVNQGYIQAYAYTDARGSYVPAEQVIERGDRFVYPGPDGEVEVFQEFGKIGKSLKNSVSPDEICDAYGADTLRVYEMSMGPLEASRPWATKDVVGAYRFLQRVWRLVVDEHTGETRVADGVELDIDTLRALHRTIVGVSEDFAALRNNTATAKLIEYTNHLTKKHRDAVPRAAVEPLVQMLAPLAPHIAEELWLRLGNTTSLAHGPFPKADAAYLVDETVEYPVQVNGKVRGRVVVAADTDEETLKAAVLTDEKVQAFLAGATPRKVIVVAGRLVNLVI</sequence>
<dbReference type="EC" id="6.1.1.4" evidence="1"/>
<dbReference type="EMBL" id="AM408590">
    <property type="protein sequence ID" value="CAL70056.1"/>
    <property type="molecule type" value="Genomic_DNA"/>
</dbReference>
<dbReference type="RefSeq" id="WP_003900794.1">
    <property type="nucleotide sequence ID" value="NC_008769.1"/>
</dbReference>
<dbReference type="SMR" id="A1KEK9"/>
<dbReference type="GeneID" id="45424000"/>
<dbReference type="KEGG" id="mbb:BCG_0072"/>
<dbReference type="HOGENOM" id="CLU_004427_0_0_11"/>
<dbReference type="Proteomes" id="UP000001472">
    <property type="component" value="Chromosome"/>
</dbReference>
<dbReference type="GO" id="GO:0005829">
    <property type="term" value="C:cytosol"/>
    <property type="evidence" value="ECO:0007669"/>
    <property type="project" value="TreeGrafter"/>
</dbReference>
<dbReference type="GO" id="GO:0002161">
    <property type="term" value="F:aminoacyl-tRNA deacylase activity"/>
    <property type="evidence" value="ECO:0007669"/>
    <property type="project" value="InterPro"/>
</dbReference>
<dbReference type="GO" id="GO:0005524">
    <property type="term" value="F:ATP binding"/>
    <property type="evidence" value="ECO:0007669"/>
    <property type="project" value="UniProtKB-UniRule"/>
</dbReference>
<dbReference type="GO" id="GO:0004823">
    <property type="term" value="F:leucine-tRNA ligase activity"/>
    <property type="evidence" value="ECO:0007669"/>
    <property type="project" value="UniProtKB-UniRule"/>
</dbReference>
<dbReference type="GO" id="GO:0006429">
    <property type="term" value="P:leucyl-tRNA aminoacylation"/>
    <property type="evidence" value="ECO:0007669"/>
    <property type="project" value="UniProtKB-UniRule"/>
</dbReference>
<dbReference type="CDD" id="cd07958">
    <property type="entry name" value="Anticodon_Ia_Leu_BEm"/>
    <property type="match status" value="1"/>
</dbReference>
<dbReference type="FunFam" id="3.40.50.620:FF:000060">
    <property type="entry name" value="Leucine--tRNA ligase"/>
    <property type="match status" value="1"/>
</dbReference>
<dbReference type="FunFam" id="3.40.50.620:FF:000087">
    <property type="entry name" value="Leucine--tRNA ligase"/>
    <property type="match status" value="1"/>
</dbReference>
<dbReference type="FunFam" id="3.40.50.620:FF:000239">
    <property type="entry name" value="Leucine--tRNA ligase"/>
    <property type="match status" value="1"/>
</dbReference>
<dbReference type="FunFam" id="3.90.740.10:FF:000017">
    <property type="entry name" value="Leucine--tRNA ligase"/>
    <property type="match status" value="1"/>
</dbReference>
<dbReference type="FunFam" id="1.10.730.10:FF:000011">
    <property type="entry name" value="Leucine--tRNA ligase chloroplastic/mitochondrial"/>
    <property type="match status" value="1"/>
</dbReference>
<dbReference type="Gene3D" id="3.40.50.620">
    <property type="entry name" value="HUPs"/>
    <property type="match status" value="3"/>
</dbReference>
<dbReference type="Gene3D" id="1.10.730.10">
    <property type="entry name" value="Isoleucyl-tRNA Synthetase, Domain 1"/>
    <property type="match status" value="1"/>
</dbReference>
<dbReference type="Gene3D" id="3.90.740.10">
    <property type="entry name" value="Valyl/Leucyl/Isoleucyl-tRNA synthetase, editing domain"/>
    <property type="match status" value="1"/>
</dbReference>
<dbReference type="HAMAP" id="MF_00049_B">
    <property type="entry name" value="Leu_tRNA_synth_B"/>
    <property type="match status" value="1"/>
</dbReference>
<dbReference type="InterPro" id="IPR001412">
    <property type="entry name" value="aa-tRNA-synth_I_CS"/>
</dbReference>
<dbReference type="InterPro" id="IPR002302">
    <property type="entry name" value="Leu-tRNA-ligase"/>
</dbReference>
<dbReference type="InterPro" id="IPR025709">
    <property type="entry name" value="Leu_tRNA-synth_edit"/>
</dbReference>
<dbReference type="InterPro" id="IPR013155">
    <property type="entry name" value="M/V/L/I-tRNA-synth_anticd-bd"/>
</dbReference>
<dbReference type="InterPro" id="IPR015413">
    <property type="entry name" value="Methionyl/Leucyl_tRNA_Synth"/>
</dbReference>
<dbReference type="InterPro" id="IPR014729">
    <property type="entry name" value="Rossmann-like_a/b/a_fold"/>
</dbReference>
<dbReference type="InterPro" id="IPR009080">
    <property type="entry name" value="tRNAsynth_Ia_anticodon-bd"/>
</dbReference>
<dbReference type="InterPro" id="IPR009008">
    <property type="entry name" value="Val/Leu/Ile-tRNA-synth_edit"/>
</dbReference>
<dbReference type="NCBIfam" id="TIGR00396">
    <property type="entry name" value="leuS_bact"/>
    <property type="match status" value="1"/>
</dbReference>
<dbReference type="PANTHER" id="PTHR43740:SF2">
    <property type="entry name" value="LEUCINE--TRNA LIGASE, MITOCHONDRIAL"/>
    <property type="match status" value="1"/>
</dbReference>
<dbReference type="PANTHER" id="PTHR43740">
    <property type="entry name" value="LEUCYL-TRNA SYNTHETASE"/>
    <property type="match status" value="1"/>
</dbReference>
<dbReference type="Pfam" id="PF08264">
    <property type="entry name" value="Anticodon_1"/>
    <property type="match status" value="1"/>
</dbReference>
<dbReference type="Pfam" id="PF13603">
    <property type="entry name" value="tRNA-synt_1_2"/>
    <property type="match status" value="1"/>
</dbReference>
<dbReference type="Pfam" id="PF09334">
    <property type="entry name" value="tRNA-synt_1g"/>
    <property type="match status" value="1"/>
</dbReference>
<dbReference type="PRINTS" id="PR00985">
    <property type="entry name" value="TRNASYNTHLEU"/>
</dbReference>
<dbReference type="SUPFAM" id="SSF47323">
    <property type="entry name" value="Anticodon-binding domain of a subclass of class I aminoacyl-tRNA synthetases"/>
    <property type="match status" value="1"/>
</dbReference>
<dbReference type="SUPFAM" id="SSF52374">
    <property type="entry name" value="Nucleotidylyl transferase"/>
    <property type="match status" value="1"/>
</dbReference>
<dbReference type="SUPFAM" id="SSF50677">
    <property type="entry name" value="ValRS/IleRS/LeuRS editing domain"/>
    <property type="match status" value="1"/>
</dbReference>
<dbReference type="PROSITE" id="PS00178">
    <property type="entry name" value="AA_TRNA_LIGASE_I"/>
    <property type="match status" value="1"/>
</dbReference>
<gene>
    <name evidence="1" type="primary">leuS</name>
    <name type="ordered locus">BCG_0072</name>
</gene>
<evidence type="ECO:0000255" key="1">
    <source>
        <dbReference type="HAMAP-Rule" id="MF_00049"/>
    </source>
</evidence>
<reference key="1">
    <citation type="journal article" date="2007" name="Proc. Natl. Acad. Sci. U.S.A.">
        <title>Genome plasticity of BCG and impact on vaccine efficacy.</title>
        <authorList>
            <person name="Brosch R."/>
            <person name="Gordon S.V."/>
            <person name="Garnier T."/>
            <person name="Eiglmeier K."/>
            <person name="Frigui W."/>
            <person name="Valenti P."/>
            <person name="Dos Santos S."/>
            <person name="Duthoy S."/>
            <person name="Lacroix C."/>
            <person name="Garcia-Pelayo C."/>
            <person name="Inwald J.K."/>
            <person name="Golby P."/>
            <person name="Garcia J.N."/>
            <person name="Hewinson R.G."/>
            <person name="Behr M.A."/>
            <person name="Quail M.A."/>
            <person name="Churcher C."/>
            <person name="Barrell B.G."/>
            <person name="Parkhill J."/>
            <person name="Cole S.T."/>
        </authorList>
    </citation>
    <scope>NUCLEOTIDE SEQUENCE [LARGE SCALE GENOMIC DNA]</scope>
    <source>
        <strain>BCG / Pasteur 1173P2</strain>
    </source>
</reference>
<accession>A1KEK9</accession>
<feature type="chain" id="PRO_1000009373" description="Leucine--tRNA ligase">
    <location>
        <begin position="1"/>
        <end position="969"/>
    </location>
</feature>
<feature type="short sequence motif" description="'HIGH' region">
    <location>
        <begin position="78"/>
        <end position="89"/>
    </location>
</feature>
<feature type="short sequence motif" description="'KMSKS' region">
    <location>
        <begin position="739"/>
        <end position="743"/>
    </location>
</feature>
<feature type="binding site" evidence="1">
    <location>
        <position position="742"/>
    </location>
    <ligand>
        <name>ATP</name>
        <dbReference type="ChEBI" id="CHEBI:30616"/>
    </ligand>
</feature>
<proteinExistence type="inferred from homology"/>
<organism>
    <name type="scientific">Mycobacterium bovis (strain BCG / Pasteur 1173P2)</name>
    <dbReference type="NCBI Taxonomy" id="410289"/>
    <lineage>
        <taxon>Bacteria</taxon>
        <taxon>Bacillati</taxon>
        <taxon>Actinomycetota</taxon>
        <taxon>Actinomycetes</taxon>
        <taxon>Mycobacteriales</taxon>
        <taxon>Mycobacteriaceae</taxon>
        <taxon>Mycobacterium</taxon>
        <taxon>Mycobacterium tuberculosis complex</taxon>
    </lineage>
</organism>
<comment type="catalytic activity">
    <reaction evidence="1">
        <text>tRNA(Leu) + L-leucine + ATP = L-leucyl-tRNA(Leu) + AMP + diphosphate</text>
        <dbReference type="Rhea" id="RHEA:11688"/>
        <dbReference type="Rhea" id="RHEA-COMP:9613"/>
        <dbReference type="Rhea" id="RHEA-COMP:9622"/>
        <dbReference type="ChEBI" id="CHEBI:30616"/>
        <dbReference type="ChEBI" id="CHEBI:33019"/>
        <dbReference type="ChEBI" id="CHEBI:57427"/>
        <dbReference type="ChEBI" id="CHEBI:78442"/>
        <dbReference type="ChEBI" id="CHEBI:78494"/>
        <dbReference type="ChEBI" id="CHEBI:456215"/>
        <dbReference type="EC" id="6.1.1.4"/>
    </reaction>
</comment>
<comment type="subcellular location">
    <subcellularLocation>
        <location evidence="1">Cytoplasm</location>
    </subcellularLocation>
</comment>
<comment type="similarity">
    <text evidence="1">Belongs to the class-I aminoacyl-tRNA synthetase family.</text>
</comment>
<keyword id="KW-0030">Aminoacyl-tRNA synthetase</keyword>
<keyword id="KW-0067">ATP-binding</keyword>
<keyword id="KW-0963">Cytoplasm</keyword>
<keyword id="KW-0436">Ligase</keyword>
<keyword id="KW-0547">Nucleotide-binding</keyword>
<keyword id="KW-0648">Protein biosynthesis</keyword>
<protein>
    <recommendedName>
        <fullName evidence="1">Leucine--tRNA ligase</fullName>
        <ecNumber evidence="1">6.1.1.4</ecNumber>
    </recommendedName>
    <alternativeName>
        <fullName evidence="1">Leucyl-tRNA synthetase</fullName>
        <shortName evidence="1">LeuRS</shortName>
    </alternativeName>
</protein>
<name>SYL_MYCBP</name>